<keyword id="KW-0007">Acetylation</keyword>
<keyword id="KW-0030">Aminoacyl-tRNA synthetase</keyword>
<keyword id="KW-0067">ATP-binding</keyword>
<keyword id="KW-0963">Cytoplasm</keyword>
<keyword id="KW-0436">Ligase</keyword>
<keyword id="KW-0479">Metal-binding</keyword>
<keyword id="KW-0547">Nucleotide-binding</keyword>
<keyword id="KW-0648">Protein biosynthesis</keyword>
<keyword id="KW-1185">Reference proteome</keyword>
<keyword id="KW-0862">Zinc</keyword>
<dbReference type="EC" id="6.1.1.5" evidence="1"/>
<dbReference type="EMBL" id="AE005674">
    <property type="protein sequence ID" value="AAN41688.1"/>
    <property type="molecule type" value="Genomic_DNA"/>
</dbReference>
<dbReference type="EMBL" id="AE014073">
    <property type="protein sequence ID" value="AAP15570.1"/>
    <property type="molecule type" value="Genomic_DNA"/>
</dbReference>
<dbReference type="RefSeq" id="NP_705981.1">
    <property type="nucleotide sequence ID" value="NC_004337.2"/>
</dbReference>
<dbReference type="RefSeq" id="WP_001286898.1">
    <property type="nucleotide sequence ID" value="NZ_WPGW01000005.1"/>
</dbReference>
<dbReference type="SMR" id="Q83MH2"/>
<dbReference type="STRING" id="198214.SF0022"/>
<dbReference type="PaxDb" id="198214-SF0022"/>
<dbReference type="GeneID" id="1024586"/>
<dbReference type="KEGG" id="sfl:SF0022"/>
<dbReference type="KEGG" id="sfx:S0025"/>
<dbReference type="PATRIC" id="fig|198214.7.peg.25"/>
<dbReference type="HOGENOM" id="CLU_001493_7_1_6"/>
<dbReference type="Proteomes" id="UP000001006">
    <property type="component" value="Chromosome"/>
</dbReference>
<dbReference type="Proteomes" id="UP000002673">
    <property type="component" value="Chromosome"/>
</dbReference>
<dbReference type="GO" id="GO:0005829">
    <property type="term" value="C:cytosol"/>
    <property type="evidence" value="ECO:0007669"/>
    <property type="project" value="TreeGrafter"/>
</dbReference>
<dbReference type="GO" id="GO:0002161">
    <property type="term" value="F:aminoacyl-tRNA deacylase activity"/>
    <property type="evidence" value="ECO:0007669"/>
    <property type="project" value="InterPro"/>
</dbReference>
<dbReference type="GO" id="GO:0005524">
    <property type="term" value="F:ATP binding"/>
    <property type="evidence" value="ECO:0007669"/>
    <property type="project" value="UniProtKB-UniRule"/>
</dbReference>
<dbReference type="GO" id="GO:0004822">
    <property type="term" value="F:isoleucine-tRNA ligase activity"/>
    <property type="evidence" value="ECO:0007669"/>
    <property type="project" value="UniProtKB-UniRule"/>
</dbReference>
<dbReference type="GO" id="GO:0000049">
    <property type="term" value="F:tRNA binding"/>
    <property type="evidence" value="ECO:0007669"/>
    <property type="project" value="InterPro"/>
</dbReference>
<dbReference type="GO" id="GO:0008270">
    <property type="term" value="F:zinc ion binding"/>
    <property type="evidence" value="ECO:0007669"/>
    <property type="project" value="UniProtKB-UniRule"/>
</dbReference>
<dbReference type="GO" id="GO:0006428">
    <property type="term" value="P:isoleucyl-tRNA aminoacylation"/>
    <property type="evidence" value="ECO:0007669"/>
    <property type="project" value="UniProtKB-UniRule"/>
</dbReference>
<dbReference type="CDD" id="cd07960">
    <property type="entry name" value="Anticodon_Ia_Ile_BEm"/>
    <property type="match status" value="1"/>
</dbReference>
<dbReference type="CDD" id="cd00818">
    <property type="entry name" value="IleRS_core"/>
    <property type="match status" value="1"/>
</dbReference>
<dbReference type="FunFam" id="1.10.730.20:FF:000001">
    <property type="entry name" value="Isoleucine--tRNA ligase"/>
    <property type="match status" value="1"/>
</dbReference>
<dbReference type="FunFam" id="3.40.50.620:FF:000042">
    <property type="entry name" value="Isoleucine--tRNA ligase"/>
    <property type="match status" value="1"/>
</dbReference>
<dbReference type="FunFam" id="3.40.50.620:FF:000048">
    <property type="entry name" value="Isoleucine--tRNA ligase"/>
    <property type="match status" value="1"/>
</dbReference>
<dbReference type="FunFam" id="3.90.740.10:FF:000002">
    <property type="entry name" value="Isoleucine--tRNA ligase"/>
    <property type="match status" value="1"/>
</dbReference>
<dbReference type="Gene3D" id="1.10.730.20">
    <property type="match status" value="1"/>
</dbReference>
<dbReference type="Gene3D" id="3.40.50.620">
    <property type="entry name" value="HUPs"/>
    <property type="match status" value="2"/>
</dbReference>
<dbReference type="Gene3D" id="3.90.740.10">
    <property type="entry name" value="Valyl/Leucyl/Isoleucyl-tRNA synthetase, editing domain"/>
    <property type="match status" value="1"/>
</dbReference>
<dbReference type="HAMAP" id="MF_02002">
    <property type="entry name" value="Ile_tRNA_synth_type1"/>
    <property type="match status" value="1"/>
</dbReference>
<dbReference type="InterPro" id="IPR001412">
    <property type="entry name" value="aa-tRNA-synth_I_CS"/>
</dbReference>
<dbReference type="InterPro" id="IPR002300">
    <property type="entry name" value="aa-tRNA-synth_Ia"/>
</dbReference>
<dbReference type="InterPro" id="IPR033708">
    <property type="entry name" value="Anticodon_Ile_BEm"/>
</dbReference>
<dbReference type="InterPro" id="IPR002301">
    <property type="entry name" value="Ile-tRNA-ligase"/>
</dbReference>
<dbReference type="InterPro" id="IPR023585">
    <property type="entry name" value="Ile-tRNA-ligase_type1"/>
</dbReference>
<dbReference type="InterPro" id="IPR050081">
    <property type="entry name" value="Ile-tRNA_ligase"/>
</dbReference>
<dbReference type="InterPro" id="IPR013155">
    <property type="entry name" value="M/V/L/I-tRNA-synth_anticd-bd"/>
</dbReference>
<dbReference type="InterPro" id="IPR014729">
    <property type="entry name" value="Rossmann-like_a/b/a_fold"/>
</dbReference>
<dbReference type="InterPro" id="IPR009080">
    <property type="entry name" value="tRNAsynth_Ia_anticodon-bd"/>
</dbReference>
<dbReference type="InterPro" id="IPR009008">
    <property type="entry name" value="Val/Leu/Ile-tRNA-synth_edit"/>
</dbReference>
<dbReference type="InterPro" id="IPR010663">
    <property type="entry name" value="Znf_FPG/IleRS"/>
</dbReference>
<dbReference type="NCBIfam" id="TIGR00392">
    <property type="entry name" value="ileS"/>
    <property type="match status" value="1"/>
</dbReference>
<dbReference type="PANTHER" id="PTHR42765:SF1">
    <property type="entry name" value="ISOLEUCINE--TRNA LIGASE, MITOCHONDRIAL"/>
    <property type="match status" value="1"/>
</dbReference>
<dbReference type="PANTHER" id="PTHR42765">
    <property type="entry name" value="SOLEUCYL-TRNA SYNTHETASE"/>
    <property type="match status" value="1"/>
</dbReference>
<dbReference type="Pfam" id="PF08264">
    <property type="entry name" value="Anticodon_1"/>
    <property type="match status" value="1"/>
</dbReference>
<dbReference type="Pfam" id="PF00133">
    <property type="entry name" value="tRNA-synt_1"/>
    <property type="match status" value="1"/>
</dbReference>
<dbReference type="Pfam" id="PF06827">
    <property type="entry name" value="zf-FPG_IleRS"/>
    <property type="match status" value="1"/>
</dbReference>
<dbReference type="PRINTS" id="PR00984">
    <property type="entry name" value="TRNASYNTHILE"/>
</dbReference>
<dbReference type="SUPFAM" id="SSF47323">
    <property type="entry name" value="Anticodon-binding domain of a subclass of class I aminoacyl-tRNA synthetases"/>
    <property type="match status" value="1"/>
</dbReference>
<dbReference type="SUPFAM" id="SSF52374">
    <property type="entry name" value="Nucleotidylyl transferase"/>
    <property type="match status" value="1"/>
</dbReference>
<dbReference type="SUPFAM" id="SSF50677">
    <property type="entry name" value="ValRS/IleRS/LeuRS editing domain"/>
    <property type="match status" value="1"/>
</dbReference>
<dbReference type="PROSITE" id="PS00178">
    <property type="entry name" value="AA_TRNA_LIGASE_I"/>
    <property type="match status" value="1"/>
</dbReference>
<feature type="chain" id="PRO_0000098460" description="Isoleucine--tRNA ligase">
    <location>
        <begin position="1"/>
        <end position="938"/>
    </location>
</feature>
<feature type="short sequence motif" description="'HIGH' region">
    <location>
        <begin position="58"/>
        <end position="68"/>
    </location>
</feature>
<feature type="short sequence motif" description="'KMSKS' region">
    <location>
        <begin position="602"/>
        <end position="606"/>
    </location>
</feature>
<feature type="binding site" evidence="1">
    <location>
        <position position="561"/>
    </location>
    <ligand>
        <name>L-isoleucyl-5'-AMP</name>
        <dbReference type="ChEBI" id="CHEBI:178002"/>
    </ligand>
</feature>
<feature type="binding site" evidence="1">
    <location>
        <position position="605"/>
    </location>
    <ligand>
        <name>ATP</name>
        <dbReference type="ChEBI" id="CHEBI:30616"/>
    </ligand>
</feature>
<feature type="binding site" evidence="1">
    <location>
        <position position="901"/>
    </location>
    <ligand>
        <name>Zn(2+)</name>
        <dbReference type="ChEBI" id="CHEBI:29105"/>
    </ligand>
</feature>
<feature type="binding site" evidence="1">
    <location>
        <position position="904"/>
    </location>
    <ligand>
        <name>Zn(2+)</name>
        <dbReference type="ChEBI" id="CHEBI:29105"/>
    </ligand>
</feature>
<feature type="binding site" evidence="1">
    <location>
        <position position="921"/>
    </location>
    <ligand>
        <name>Zn(2+)</name>
        <dbReference type="ChEBI" id="CHEBI:29105"/>
    </ligand>
</feature>
<feature type="binding site" evidence="1">
    <location>
        <position position="924"/>
    </location>
    <ligand>
        <name>Zn(2+)</name>
        <dbReference type="ChEBI" id="CHEBI:29105"/>
    </ligand>
</feature>
<feature type="modified residue" description="N6-acetyllysine" evidence="1">
    <location>
        <position position="183"/>
    </location>
</feature>
<feature type="sequence conflict" description="In Ref. 2; AAP15570." evidence="2" ref="2">
    <original>R</original>
    <variation>C</variation>
    <location>
        <position position="782"/>
    </location>
</feature>
<protein>
    <recommendedName>
        <fullName evidence="1">Isoleucine--tRNA ligase</fullName>
        <ecNumber evidence="1">6.1.1.5</ecNumber>
    </recommendedName>
    <alternativeName>
        <fullName evidence="1">Isoleucyl-tRNA synthetase</fullName>
        <shortName evidence="1">IleRS</shortName>
    </alternativeName>
</protein>
<accession>Q83MH2</accession>
<accession>Q7UDT9</accession>
<evidence type="ECO:0000255" key="1">
    <source>
        <dbReference type="HAMAP-Rule" id="MF_02002"/>
    </source>
</evidence>
<evidence type="ECO:0000305" key="2"/>
<sequence length="938" mass="104267">MSDYKSTLNLPETGFPMRGDLAKREPGMLARWTDDDLYGIIRAAKKGKKTFILHDGPPYANGSIHIGHSVNKILKDIIVKSKGLSGYDSPYVPGWDCHGLPIELKVEQEYGKPGEKFTAAEFRAKCREYAATQVDGQRKDFIRLGVLGDWSHPYLTMDFKTEANIIRALGKIIGNGHLHKGAKPVHWCVDCRSALAEAEVEYYDKTSPSIDVAFQAVDQDALKAKFGVSNVNGPISLVIWTTTPWTLPANRAISIAPDFDYALVQIDGQAVILAKDLVESVMQRIGVTDYTILGTVKGAELELLRFTHPFMGFDVPAILGDHVTLDAGTGAVHTAPGHGPDDYVIGQKYGLETANPVGPDGTYLPGTYPTLDGVNVFKANDIVVALLQEKGALLHVEKMQHSYPCCWRHKTPIIFRATPQWFVSMDQKGLRAQSLKEIKGVQWLPDWGQARIESMVANRPDWCISRQRTWGVPMSLFVHKDTEELHPRTLELMEEVAKRVEVDGIQAWWDLDAKEILGDEADQYVKVPDTLDVWFDSGSTHSSVVDVRPEFAGHAADMYLEGSDQHRGWFMSSLMISTAMKGKAPYRQVLTHGFTVDGQGRKMSKSIGNTVSPQDVMNKLGADILRLWVASTDYTGEMAVSDEILKRAADSYRRIRNTARFLLANLNGFDPAKDMVKPEEMVVLDRWAVGCAKAAQEDILKAYEAYDFHEVVQRLMRFCSVEMGSFYLDIIKDRQYTAKADSVARRSCQTALYHIAEALVRWMAPILSFTADEVWGYLPGEREKYVFTGEWYEGLFGLADSEAMNDAFWDELLKVRGEVNKVIEQARADKKVGGSLEAAVTLYAEPELAAKLTALGDELRFVLLTSGATVADYNDAPADAQQSEVLKGLKVALSKAEGEKCPRCWHYTQDVGKVAEHAEICGRCVSNVAGDGEKRKFA</sequence>
<reference key="1">
    <citation type="journal article" date="2002" name="Nucleic Acids Res.">
        <title>Genome sequence of Shigella flexneri 2a: insights into pathogenicity through comparison with genomes of Escherichia coli K12 and O157.</title>
        <authorList>
            <person name="Jin Q."/>
            <person name="Yuan Z."/>
            <person name="Xu J."/>
            <person name="Wang Y."/>
            <person name="Shen Y."/>
            <person name="Lu W."/>
            <person name="Wang J."/>
            <person name="Liu H."/>
            <person name="Yang J."/>
            <person name="Yang F."/>
            <person name="Zhang X."/>
            <person name="Zhang J."/>
            <person name="Yang G."/>
            <person name="Wu H."/>
            <person name="Qu D."/>
            <person name="Dong J."/>
            <person name="Sun L."/>
            <person name="Xue Y."/>
            <person name="Zhao A."/>
            <person name="Gao Y."/>
            <person name="Zhu J."/>
            <person name="Kan B."/>
            <person name="Ding K."/>
            <person name="Chen S."/>
            <person name="Cheng H."/>
            <person name="Yao Z."/>
            <person name="He B."/>
            <person name="Chen R."/>
            <person name="Ma D."/>
            <person name="Qiang B."/>
            <person name="Wen Y."/>
            <person name="Hou Y."/>
            <person name="Yu J."/>
        </authorList>
    </citation>
    <scope>NUCLEOTIDE SEQUENCE [LARGE SCALE GENOMIC DNA]</scope>
    <source>
        <strain>301 / Serotype 2a</strain>
    </source>
</reference>
<reference key="2">
    <citation type="journal article" date="2003" name="Infect. Immun.">
        <title>Complete genome sequence and comparative genomics of Shigella flexneri serotype 2a strain 2457T.</title>
        <authorList>
            <person name="Wei J."/>
            <person name="Goldberg M.B."/>
            <person name="Burland V."/>
            <person name="Venkatesan M.M."/>
            <person name="Deng W."/>
            <person name="Fournier G."/>
            <person name="Mayhew G.F."/>
            <person name="Plunkett G. III"/>
            <person name="Rose D.J."/>
            <person name="Darling A."/>
            <person name="Mau B."/>
            <person name="Perna N.T."/>
            <person name="Payne S.M."/>
            <person name="Runyen-Janecky L.J."/>
            <person name="Zhou S."/>
            <person name="Schwartz D.C."/>
            <person name="Blattner F.R."/>
        </authorList>
    </citation>
    <scope>NUCLEOTIDE SEQUENCE [LARGE SCALE GENOMIC DNA]</scope>
    <source>
        <strain>ATCC 700930 / 2457T / Serotype 2a</strain>
    </source>
</reference>
<name>SYI_SHIFL</name>
<proteinExistence type="inferred from homology"/>
<comment type="function">
    <text evidence="1">Catalyzes the attachment of isoleucine to tRNA(Ile). As IleRS can inadvertently accommodate and process structurally similar amino acids such as valine, to avoid such errors it has two additional distinct tRNA(Ile)-dependent editing activities. One activity is designated as 'pretransfer' editing and involves the hydrolysis of activated Val-AMP. The other activity is designated 'posttransfer' editing and involves deacylation of mischarged Val-tRNA(Ile).</text>
</comment>
<comment type="catalytic activity">
    <reaction evidence="1">
        <text>tRNA(Ile) + L-isoleucine + ATP = L-isoleucyl-tRNA(Ile) + AMP + diphosphate</text>
        <dbReference type="Rhea" id="RHEA:11060"/>
        <dbReference type="Rhea" id="RHEA-COMP:9666"/>
        <dbReference type="Rhea" id="RHEA-COMP:9695"/>
        <dbReference type="ChEBI" id="CHEBI:30616"/>
        <dbReference type="ChEBI" id="CHEBI:33019"/>
        <dbReference type="ChEBI" id="CHEBI:58045"/>
        <dbReference type="ChEBI" id="CHEBI:78442"/>
        <dbReference type="ChEBI" id="CHEBI:78528"/>
        <dbReference type="ChEBI" id="CHEBI:456215"/>
        <dbReference type="EC" id="6.1.1.5"/>
    </reaction>
</comment>
<comment type="cofactor">
    <cofactor evidence="1">
        <name>Zn(2+)</name>
        <dbReference type="ChEBI" id="CHEBI:29105"/>
    </cofactor>
    <text evidence="1">Binds 1 zinc ion per subunit.</text>
</comment>
<comment type="subunit">
    <text evidence="1">Monomer.</text>
</comment>
<comment type="subcellular location">
    <subcellularLocation>
        <location evidence="1">Cytoplasm</location>
    </subcellularLocation>
</comment>
<comment type="domain">
    <text evidence="1">IleRS has two distinct active sites: one for aminoacylation and one for editing. The misactivated valine is translocated from the active site to the editing site, which sterically excludes the correctly activated isoleucine. The single editing site contains two valyl binding pockets, one specific for each substrate (Val-AMP or Val-tRNA(Ile)).</text>
</comment>
<comment type="similarity">
    <text evidence="1">Belongs to the class-I aminoacyl-tRNA synthetase family. IleS type 1 subfamily.</text>
</comment>
<gene>
    <name evidence="1" type="primary">ileS</name>
    <name type="ordered locus">SF0022</name>
    <name type="ordered locus">S0025</name>
</gene>
<organism>
    <name type="scientific">Shigella flexneri</name>
    <dbReference type="NCBI Taxonomy" id="623"/>
    <lineage>
        <taxon>Bacteria</taxon>
        <taxon>Pseudomonadati</taxon>
        <taxon>Pseudomonadota</taxon>
        <taxon>Gammaproteobacteria</taxon>
        <taxon>Enterobacterales</taxon>
        <taxon>Enterobacteriaceae</taxon>
        <taxon>Shigella</taxon>
    </lineage>
</organism>